<keyword id="KW-0053">Apoptosis</keyword>
<keyword id="KW-0963">Cytoplasm</keyword>
<keyword id="KW-0968">Cytoplasmic vesicle</keyword>
<keyword id="KW-0539">Nucleus</keyword>
<keyword id="KW-1267">Proteomics identification</keyword>
<keyword id="KW-1185">Reference proteome</keyword>
<keyword id="KW-0677">Repeat</keyword>
<name>PHLA1_HUMAN</name>
<gene>
    <name type="primary">PHLDA1</name>
    <name type="synonym">PHRIP</name>
    <name type="synonym">TDAG51</name>
</gene>
<accession>Q8WV24</accession>
<accession>A1A4G9</accession>
<accession>Q15184</accession>
<accession>Q2TAN2</accession>
<accession>Q9NZ17</accession>
<feature type="chain" id="PRO_0000053897" description="Pleckstrin homology-like domain family A member 1">
    <location>
        <begin position="1"/>
        <end position="401"/>
    </location>
</feature>
<feature type="domain" description="PH">
    <location>
        <begin position="151"/>
        <end position="283"/>
    </location>
</feature>
<feature type="region of interest" description="Disordered" evidence="1">
    <location>
        <begin position="39"/>
        <end position="67"/>
    </location>
</feature>
<feature type="region of interest" description="Disordered" evidence="1">
    <location>
        <begin position="190"/>
        <end position="222"/>
    </location>
</feature>
<feature type="region of interest" description="Disordered" evidence="1">
    <location>
        <begin position="293"/>
        <end position="401"/>
    </location>
</feature>
<feature type="region of interest" description="15 X 2 AA repeats of P-Q">
    <location>
        <begin position="311"/>
        <end position="346"/>
    </location>
</feature>
<feature type="region of interest" description="14 X 2 AA repeats of P-H">
    <location>
        <begin position="352"/>
        <end position="389"/>
    </location>
</feature>
<feature type="compositionally biased region" description="Low complexity" evidence="1">
    <location>
        <begin position="190"/>
        <end position="204"/>
    </location>
</feature>
<feature type="compositionally biased region" description="Pro residues" evidence="1">
    <location>
        <begin position="308"/>
        <end position="344"/>
    </location>
</feature>
<feature type="compositionally biased region" description="Basic residues" evidence="1">
    <location>
        <begin position="352"/>
        <end position="378"/>
    </location>
</feature>
<feature type="sequence conflict" description="In Ref. 1; AAF64165, 2; CAA90576 and 3." evidence="5" ref="1 2 3">
    <location>
        <position position="204"/>
    </location>
</feature>
<protein>
    <recommendedName>
        <fullName>Pleckstrin homology-like domain family A member 1</fullName>
    </recommendedName>
    <alternativeName>
        <fullName>Apoptosis-associated nuclear protein</fullName>
    </alternativeName>
    <alternativeName>
        <fullName>Proline- and glutamine-rich protein</fullName>
        <shortName>PQ-rich protein</shortName>
        <shortName>PQR protein</shortName>
    </alternativeName>
    <alternativeName>
        <fullName>Proline- and histidine-rich protein</fullName>
    </alternativeName>
    <alternativeName>
        <fullName>T-cell death-associated gene 51 protein</fullName>
    </alternativeName>
</protein>
<proteinExistence type="evidence at protein level"/>
<organism>
    <name type="scientific">Homo sapiens</name>
    <name type="common">Human</name>
    <dbReference type="NCBI Taxonomy" id="9606"/>
    <lineage>
        <taxon>Eukaryota</taxon>
        <taxon>Metazoa</taxon>
        <taxon>Chordata</taxon>
        <taxon>Craniata</taxon>
        <taxon>Vertebrata</taxon>
        <taxon>Euteleostomi</taxon>
        <taxon>Mammalia</taxon>
        <taxon>Eutheria</taxon>
        <taxon>Euarchontoglires</taxon>
        <taxon>Primates</taxon>
        <taxon>Haplorrhini</taxon>
        <taxon>Catarrhini</taxon>
        <taxon>Hominidae</taxon>
        <taxon>Homo</taxon>
    </lineage>
</organism>
<reference key="1">
    <citation type="journal article" date="2000" name="Cytogenet. Cell Genet.">
        <title>Assignment of the human PHLDA1 gene to chromosome 12q15 by radiation hybrid mapping.</title>
        <authorList>
            <person name="Kuske M.D."/>
            <person name="Johnson J.P."/>
        </authorList>
    </citation>
    <scope>NUCLEOTIDE SEQUENCE [GENOMIC DNA]</scope>
</reference>
<reference key="2">
    <citation type="submission" date="1995-07" db="EMBL/GenBank/DDBJ databases">
        <title>A cDNA, which predicts a protein with PQ-rich repeats, isolated from a phage library of human fetal liver tissue.</title>
        <authorList>
            <person name="Wagner F.F."/>
            <person name="Flegel W.A."/>
        </authorList>
    </citation>
    <scope>NUCLEOTIDE SEQUENCE [MRNA]</scope>
    <source>
        <tissue>Fetal liver</tissue>
    </source>
</reference>
<reference key="3">
    <citation type="journal article" date="2004" name="Genome Res.">
        <title>The status, quality, and expansion of the NIH full-length cDNA project: the Mammalian Gene Collection (MGC).</title>
        <authorList>
            <consortium name="The MGC Project Team"/>
        </authorList>
    </citation>
    <scope>NUCLEOTIDE SEQUENCE [LARGE SCALE MRNA] OF 53-401</scope>
    <source>
        <tissue>Brain</tissue>
        <tissue>Uterus</tissue>
    </source>
</reference>
<reference key="4">
    <citation type="journal article" date="2002" name="Cancer Res.">
        <title>Identification of the human PHLDA1/TDAG51 gene: down-regulation in metastatic melanoma contributes to apoptosis resistance and growth deregulation.</title>
        <authorList>
            <person name="Neef R."/>
            <person name="Kuske M.A."/>
            <person name="Proels E."/>
            <person name="Johnson J.P."/>
        </authorList>
    </citation>
    <scope>NUCLEOTIDE SEQUENCE [MRNA] OF 350-401</scope>
    <scope>TISSUE SPECIFICITY</scope>
</reference>
<reference key="5">
    <citation type="journal article" date="2001" name="Cell. Signal.">
        <title>Inhibition of protein synthesis by the T cell receptor-inducible human TDAG51 gene product.</title>
        <authorList>
            <person name="Hinz T."/>
            <person name="Flindt S."/>
            <person name="Marx A."/>
            <person name="Janssen O."/>
            <person name="Kabelitz D."/>
        </authorList>
    </citation>
    <scope>FUNCTION</scope>
    <scope>SUBCELLULAR LOCATION</scope>
    <scope>INTERACTION WITH RPL14; EIF3S7 AND PABPC4</scope>
</reference>
<reference key="6">
    <citation type="journal article" date="2003" name="J. Biol. Chem.">
        <title>TDAG51 is induced by homocysteine, promotes detachment-mediated programmed cell death, and contributes to the development of atherosclerosis in hyperhomocysteinemia.</title>
        <authorList>
            <person name="Hossain G.S."/>
            <person name="van Thienen J.V."/>
            <person name="Werstuck G.H."/>
            <person name="Zhou J."/>
            <person name="Sood S.K."/>
            <person name="Dickhout J.G."/>
            <person name="de Koning A.B."/>
            <person name="Tang D."/>
            <person name="Wu D."/>
            <person name="Falk E."/>
            <person name="Poddar R."/>
            <person name="Jacobsen D.W."/>
            <person name="Zhang K."/>
            <person name="Kaufman R.J."/>
            <person name="Austin R.C."/>
        </authorList>
    </citation>
    <scope>FUNCTION</scope>
    <scope>SUBCELLULAR LOCATION</scope>
    <scope>TISSUE SPECIFICITY</scope>
    <scope>INDUCTION</scope>
</reference>
<reference key="7">
    <citation type="journal article" date="2012" name="Proc. Natl. Acad. Sci. U.S.A.">
        <title>N-terminal acetylome analyses and functional insights of the N-terminal acetyltransferase NatB.</title>
        <authorList>
            <person name="Van Damme P."/>
            <person name="Lasa M."/>
            <person name="Polevoda B."/>
            <person name="Gazquez C."/>
            <person name="Elosegui-Artola A."/>
            <person name="Kim D.S."/>
            <person name="De Juan-Pardo E."/>
            <person name="Demeyer K."/>
            <person name="Hole K."/>
            <person name="Larrea E."/>
            <person name="Timmerman E."/>
            <person name="Prieto J."/>
            <person name="Arnesen T."/>
            <person name="Sherman F."/>
            <person name="Gevaert K."/>
            <person name="Aldabe R."/>
        </authorList>
    </citation>
    <scope>IDENTIFICATION BY MASS SPECTROMETRY [LARGE SCALE ANALYSIS]</scope>
</reference>
<evidence type="ECO:0000256" key="1">
    <source>
        <dbReference type="SAM" id="MobiDB-lite"/>
    </source>
</evidence>
<evidence type="ECO:0000269" key="2">
    <source>
    </source>
</evidence>
<evidence type="ECO:0000269" key="3">
    <source>
    </source>
</evidence>
<evidence type="ECO:0000269" key="4">
    <source>
    </source>
</evidence>
<evidence type="ECO:0000305" key="5"/>
<dbReference type="EMBL" id="AF239986">
    <property type="protein sequence ID" value="AAF64165.1"/>
    <property type="molecule type" value="Genomic_DNA"/>
</dbReference>
<dbReference type="EMBL" id="Z50194">
    <property type="protein sequence ID" value="CAA90576.1"/>
    <property type="molecule type" value="mRNA"/>
</dbReference>
<dbReference type="EMBL" id="BC018929">
    <property type="protein sequence ID" value="AAH18929.3"/>
    <property type="status" value="ALT_INIT"/>
    <property type="molecule type" value="mRNA"/>
</dbReference>
<dbReference type="EMBL" id="BC110820">
    <property type="protein sequence ID" value="AAI10821.1"/>
    <property type="status" value="ALT_INIT"/>
    <property type="molecule type" value="mRNA"/>
</dbReference>
<dbReference type="EMBL" id="BC126425">
    <property type="protein sequence ID" value="AAI26426.2"/>
    <property type="status" value="ALT_INIT"/>
    <property type="molecule type" value="mRNA"/>
</dbReference>
<dbReference type="EMBL" id="AF220656">
    <property type="protein sequence ID" value="AAF36387.1"/>
    <property type="molecule type" value="mRNA"/>
</dbReference>
<dbReference type="CCDS" id="CCDS31861.1"/>
<dbReference type="PIR" id="S58222">
    <property type="entry name" value="S58222"/>
</dbReference>
<dbReference type="RefSeq" id="NP_031376.3">
    <property type="nucleotide sequence ID" value="NM_007350.3"/>
</dbReference>
<dbReference type="BioGRID" id="116498">
    <property type="interactions" value="70"/>
</dbReference>
<dbReference type="FunCoup" id="Q8WV24">
    <property type="interactions" value="1147"/>
</dbReference>
<dbReference type="IntAct" id="Q8WV24">
    <property type="interactions" value="17"/>
</dbReference>
<dbReference type="MINT" id="Q8WV24"/>
<dbReference type="STRING" id="9606.ENSP00000266671"/>
<dbReference type="GlyGen" id="Q8WV24">
    <property type="glycosylation" value="1 site, 1 O-linked glycan (1 site)"/>
</dbReference>
<dbReference type="iPTMnet" id="Q8WV24"/>
<dbReference type="PhosphoSitePlus" id="Q8WV24"/>
<dbReference type="BioMuta" id="PHLDA1"/>
<dbReference type="DMDM" id="229463035"/>
<dbReference type="jPOST" id="Q8WV24"/>
<dbReference type="MassIVE" id="Q8WV24"/>
<dbReference type="PaxDb" id="9606-ENSP00000266671"/>
<dbReference type="PeptideAtlas" id="Q8WV24"/>
<dbReference type="ProteomicsDB" id="74739"/>
<dbReference type="Pumba" id="Q8WV24"/>
<dbReference type="Antibodypedia" id="4254">
    <property type="antibodies" value="240 antibodies from 31 providers"/>
</dbReference>
<dbReference type="DNASU" id="22822"/>
<dbReference type="Ensembl" id="ENST00000266671.10">
    <property type="protein sequence ID" value="ENSP00000266671.5"/>
    <property type="gene ID" value="ENSG00000139289.15"/>
</dbReference>
<dbReference type="GeneID" id="22822"/>
<dbReference type="KEGG" id="hsa:22822"/>
<dbReference type="MANE-Select" id="ENST00000266671.10">
    <property type="protein sequence ID" value="ENSP00000266671.5"/>
    <property type="RefSeq nucleotide sequence ID" value="NM_007350.3"/>
    <property type="RefSeq protein sequence ID" value="NP_031376.3"/>
</dbReference>
<dbReference type="UCSC" id="uc001sxu.3">
    <property type="organism name" value="human"/>
</dbReference>
<dbReference type="AGR" id="HGNC:8933"/>
<dbReference type="CTD" id="22822"/>
<dbReference type="DisGeNET" id="22822"/>
<dbReference type="GeneCards" id="PHLDA1"/>
<dbReference type="HGNC" id="HGNC:8933">
    <property type="gene designation" value="PHLDA1"/>
</dbReference>
<dbReference type="HPA" id="ENSG00000139289">
    <property type="expression patterns" value="Tissue enhanced (salivary)"/>
</dbReference>
<dbReference type="MIM" id="605335">
    <property type="type" value="gene"/>
</dbReference>
<dbReference type="neXtProt" id="NX_Q8WV24"/>
<dbReference type="OpenTargets" id="ENSG00000139289"/>
<dbReference type="PharmGKB" id="PA33274"/>
<dbReference type="VEuPathDB" id="HostDB:ENSG00000139289"/>
<dbReference type="eggNOG" id="ENOG502RZ5Q">
    <property type="taxonomic scope" value="Eukaryota"/>
</dbReference>
<dbReference type="GeneTree" id="ENSGT00440000039564"/>
<dbReference type="HOGENOM" id="CLU_062639_0_0_1"/>
<dbReference type="InParanoid" id="Q8WV24"/>
<dbReference type="OMA" id="GGWPIQK"/>
<dbReference type="OrthoDB" id="9630709at2759"/>
<dbReference type="PAN-GO" id="Q8WV24">
    <property type="GO annotations" value="2 GO annotations based on evolutionary models"/>
</dbReference>
<dbReference type="PhylomeDB" id="Q8WV24"/>
<dbReference type="TreeFam" id="TF332320"/>
<dbReference type="PathwayCommons" id="Q8WV24"/>
<dbReference type="Reactome" id="R-HSA-8854521">
    <property type="pathway name" value="Interaction between PHLDA1 and AURKA"/>
</dbReference>
<dbReference type="Reactome" id="R-HSA-9841922">
    <property type="pathway name" value="MLL4 and MLL3 complexes regulate expression of PPARG target genes in adipogenesis and hepatic steatosis"/>
</dbReference>
<dbReference type="SignaLink" id="Q8WV24"/>
<dbReference type="SIGNOR" id="Q8WV24"/>
<dbReference type="BioGRID-ORCS" id="22822">
    <property type="hits" value="15 hits in 1148 CRISPR screens"/>
</dbReference>
<dbReference type="CD-CODE" id="91857CE7">
    <property type="entry name" value="Nucleolus"/>
</dbReference>
<dbReference type="ChiTaRS" id="PHLDA1">
    <property type="organism name" value="human"/>
</dbReference>
<dbReference type="GeneWiki" id="PHLDA1"/>
<dbReference type="GenomeRNAi" id="22822"/>
<dbReference type="Pharos" id="Q8WV24">
    <property type="development level" value="Tbio"/>
</dbReference>
<dbReference type="PRO" id="PR:Q8WV24"/>
<dbReference type="Proteomes" id="UP000005640">
    <property type="component" value="Chromosome 12"/>
</dbReference>
<dbReference type="RNAct" id="Q8WV24">
    <property type="molecule type" value="protein"/>
</dbReference>
<dbReference type="Bgee" id="ENSG00000139289">
    <property type="expression patterns" value="Expressed in ventricular zone and 104 other cell types or tissues"/>
</dbReference>
<dbReference type="ExpressionAtlas" id="Q8WV24">
    <property type="expression patterns" value="baseline and differential"/>
</dbReference>
<dbReference type="GO" id="GO:0031410">
    <property type="term" value="C:cytoplasmic vesicle"/>
    <property type="evidence" value="ECO:0007669"/>
    <property type="project" value="UniProtKB-KW"/>
</dbReference>
<dbReference type="GO" id="GO:0005829">
    <property type="term" value="C:cytosol"/>
    <property type="evidence" value="ECO:0000304"/>
    <property type="project" value="Reactome"/>
</dbReference>
<dbReference type="GO" id="GO:0005730">
    <property type="term" value="C:nucleolus"/>
    <property type="evidence" value="ECO:0000314"/>
    <property type="project" value="HPA"/>
</dbReference>
<dbReference type="GO" id="GO:0005654">
    <property type="term" value="C:nucleoplasm"/>
    <property type="evidence" value="ECO:0000314"/>
    <property type="project" value="HPA"/>
</dbReference>
<dbReference type="GO" id="GO:0005634">
    <property type="term" value="C:nucleus"/>
    <property type="evidence" value="ECO:0000318"/>
    <property type="project" value="GO_Central"/>
</dbReference>
<dbReference type="GO" id="GO:1901981">
    <property type="term" value="F:phosphatidylinositol phosphate binding"/>
    <property type="evidence" value="ECO:0007669"/>
    <property type="project" value="InterPro"/>
</dbReference>
<dbReference type="GO" id="GO:0006915">
    <property type="term" value="P:apoptotic process"/>
    <property type="evidence" value="ECO:0007669"/>
    <property type="project" value="UniProtKB-KW"/>
</dbReference>
<dbReference type="GO" id="GO:0043065">
    <property type="term" value="P:positive regulation of apoptotic process"/>
    <property type="evidence" value="ECO:0000318"/>
    <property type="project" value="GO_Central"/>
</dbReference>
<dbReference type="Gene3D" id="2.30.29.30">
    <property type="entry name" value="Pleckstrin-homology domain (PH domain)/Phosphotyrosine-binding domain (PTB)"/>
    <property type="match status" value="1"/>
</dbReference>
<dbReference type="InterPro" id="IPR011993">
    <property type="entry name" value="PH-like_dom_sf"/>
</dbReference>
<dbReference type="InterPro" id="IPR001849">
    <property type="entry name" value="PH_domain"/>
</dbReference>
<dbReference type="InterPro" id="IPR042832">
    <property type="entry name" value="PHLA1/2/3"/>
</dbReference>
<dbReference type="PANTHER" id="PTHR15478:SF4">
    <property type="entry name" value="PLECKSTRIN HOMOLOGY-LIKE DOMAIN FAMILY A MEMBER 1"/>
    <property type="match status" value="1"/>
</dbReference>
<dbReference type="PANTHER" id="PTHR15478">
    <property type="entry name" value="PLECKSTRIN HOMOLOGY-LIKE DOMAIN, PQ-RICH PROTEIN"/>
    <property type="match status" value="1"/>
</dbReference>
<dbReference type="SMART" id="SM00233">
    <property type="entry name" value="PH"/>
    <property type="match status" value="1"/>
</dbReference>
<dbReference type="SUPFAM" id="SSF50729">
    <property type="entry name" value="PH domain-like"/>
    <property type="match status" value="1"/>
</dbReference>
<sequence>MRRAPAAERLLELGFPPRCGRQEPPFPLGVTRGWGRWPIQKRREGARPVPFSERSQEDGRGPAARSSGTLWRIRTRLSLCRDPEPPPPLCLLRVSLLCALRAGGRGSRWGEDGARLLLLPPARAAGNGEAEPSGGPSYAGRMLESSGCKALKEGVLEKRSDGLLQLWKKKCCILTEEGLLLIPPKQLQHQQQQQQQQQQQQQQQPGQGPAEPSQPSGPAVASLEPPVKLKELHFSNMKTVDCVERKGKYMYFTVVMAEGKEIDFRCPQDQGWNAEITLQMVQYKNRQAILAVKSTRQKQQHLVQQQPPSQPQPQPQLQPQPQPQPQPQPQPQSQPQPQPQPKPQPQQLHPYPHPHPHPHSHPHSHPHPHPHPHPHQIPHPHPQPHSQPHGHRLLRSTSNSA</sequence>
<comment type="function">
    <text evidence="2 4">Seems to be involved in regulation of apoptosis. May be involved in detachment-mediated programmed cell death. May mediate apoptosis during neuronal development. May be involved in regulation of anti-apoptotic effects of IGF1. May be involved in translational regulation.</text>
</comment>
<comment type="subunit">
    <text evidence="2">Interacts with RPL14, EIF3S7 and PABPC4.</text>
</comment>
<comment type="interaction">
    <interactant intactId="EBI-738731">
        <id>Q8WV24</id>
    </interactant>
    <interactant intactId="EBI-353818">
        <id>O15371</id>
        <label>EIF3D</label>
    </interactant>
    <organismsDiffer>false</organismsDiffer>
    <experiments>2</experiments>
</comment>
<comment type="interaction">
    <interactant intactId="EBI-738731">
        <id>Q8WV24</id>
    </interactant>
    <interactant intactId="EBI-724076">
        <id>Q99750</id>
        <label>MDFI</label>
    </interactant>
    <organismsDiffer>false</organismsDiffer>
    <experiments>3</experiments>
</comment>
<comment type="interaction">
    <interactant intactId="EBI-738731">
        <id>Q8WV24</id>
    </interactant>
    <interactant intactId="EBI-372844">
        <id>Q13310</id>
        <label>PABPC4</label>
    </interactant>
    <organismsDiffer>false</organismsDiffer>
    <experiments>2</experiments>
</comment>
<comment type="interaction">
    <interactant intactId="EBI-738731">
        <id>Q8WV24</id>
    </interactant>
    <interactant intactId="EBI-356746">
        <id>P50914</id>
        <label>RPL14</label>
    </interactant>
    <organismsDiffer>false</organismsDiffer>
    <experiments>2</experiments>
</comment>
<comment type="subcellular location">
    <subcellularLocation>
        <location evidence="2">Cytoplasm</location>
    </subcellularLocation>
    <subcellularLocation>
        <location evidence="4">Cytoplasmic vesicle</location>
    </subcellularLocation>
    <subcellularLocation>
        <location evidence="2">Nucleus</location>
        <location evidence="2">Nucleolus</location>
    </subcellularLocation>
    <text evidence="4">Colocalizes with intracellular vesicles.</text>
</comment>
<comment type="tissue specificity">
    <text evidence="3 4">Widely expressed with highest levels in pancreas. Strongly expressed by benign melanocytic nevi, and progressively reduced expressed in primary and metastatic melanomas (at protein level).</text>
</comment>
<comment type="induction">
    <text evidence="4">Induced by homocysteine and other endoplasmic reticulum stress-inducing reagents. Induced by phorbol ester (TPA)/ionomycin, and stimulation of the T-cell receptor (TCR) complex in T-cells.</text>
</comment>
<comment type="sequence caution" evidence="5">
    <conflict type="erroneous initiation">
        <sequence resource="EMBL-CDS" id="AAH18929"/>
    </conflict>
</comment>
<comment type="sequence caution" evidence="5">
    <conflict type="erroneous initiation">
        <sequence resource="EMBL-CDS" id="AAI10821"/>
    </conflict>
</comment>
<comment type="sequence caution" evidence="5">
    <conflict type="erroneous initiation">
        <sequence resource="EMBL-CDS" id="AAI26426"/>
    </conflict>
</comment>